<protein>
    <recommendedName>
        <fullName>5-cytosine rRNA methyltransferase NSUN4</fullName>
        <ecNumber evidence="2">2.1.1.-</ecNumber>
    </recommendedName>
    <alternativeName>
        <fullName evidence="5">5-cytosine tRNA methyltransferase NSUN4</fullName>
        <ecNumber evidence="2">2.1.1.-</ecNumber>
    </alternativeName>
    <alternativeName>
        <fullName>NOL1/NOP2/Sun domain family member 4</fullName>
    </alternativeName>
</protein>
<gene>
    <name type="primary">nsun4</name>
    <name type="ORF">TGas136a10.1</name>
</gene>
<evidence type="ECO:0000250" key="1"/>
<evidence type="ECO:0000250" key="2">
    <source>
        <dbReference type="UniProtKB" id="Q95XR2"/>
    </source>
</evidence>
<evidence type="ECO:0000250" key="3">
    <source>
        <dbReference type="UniProtKB" id="Q96CB9"/>
    </source>
</evidence>
<evidence type="ECO:0000255" key="4">
    <source>
        <dbReference type="PROSITE-ProRule" id="PRU01023"/>
    </source>
</evidence>
<evidence type="ECO:0000305" key="5"/>
<accession>Q66KI9</accession>
<reference key="1">
    <citation type="submission" date="2006-10" db="EMBL/GenBank/DDBJ databases">
        <authorList>
            <consortium name="Sanger Xenopus tropicalis EST/cDNA project"/>
        </authorList>
    </citation>
    <scope>NUCLEOTIDE SEQUENCE [LARGE SCALE MRNA]</scope>
    <source>
        <tissue>Gastrula</tissue>
    </source>
</reference>
<reference key="2">
    <citation type="submission" date="2004-08" db="EMBL/GenBank/DDBJ databases">
        <authorList>
            <consortium name="NIH - Xenopus Gene Collection (XGC) project"/>
        </authorList>
    </citation>
    <scope>NUCLEOTIDE SEQUENCE [LARGE SCALE MRNA]</scope>
</reference>
<keyword id="KW-0489">Methyltransferase</keyword>
<keyword id="KW-0496">Mitochondrion</keyword>
<keyword id="KW-1185">Reference proteome</keyword>
<keyword id="KW-0694">RNA-binding</keyword>
<keyword id="KW-0698">rRNA processing</keyword>
<keyword id="KW-0949">S-adenosyl-L-methionine</keyword>
<keyword id="KW-0808">Transferase</keyword>
<keyword id="KW-0809">Transit peptide</keyword>
<comment type="function">
    <text evidence="1">Involved in mitochondrial ribosome large subunit biogenesis.</text>
</comment>
<comment type="function">
    <text evidence="3">Mitochondrial RNA cytosine C(5)-methyltransferase that methylates cytosine to 5-methylcytosine (m5C) in various RNAs, such as rRNAs, mRNAs and some long non-coding RNAs (lncRNAs) (By similarity). Involved in mitochondrial ribosome small subunit (SSU) maturation by catalyzing methylation of mitochondrial 12S rRNA (By similarity).</text>
</comment>
<comment type="catalytic activity">
    <reaction evidence="3">
        <text>a cytidine in rRNA + S-adenosyl-L-methionine = a 5-methylcytidine in rRNA + S-adenosyl-L-homocysteine + H(+)</text>
        <dbReference type="Rhea" id="RHEA:61484"/>
        <dbReference type="Rhea" id="RHEA-COMP:15836"/>
        <dbReference type="Rhea" id="RHEA-COMP:15837"/>
        <dbReference type="ChEBI" id="CHEBI:15378"/>
        <dbReference type="ChEBI" id="CHEBI:57856"/>
        <dbReference type="ChEBI" id="CHEBI:59789"/>
        <dbReference type="ChEBI" id="CHEBI:74483"/>
        <dbReference type="ChEBI" id="CHEBI:82748"/>
    </reaction>
</comment>
<comment type="catalytic activity">
    <reaction evidence="3">
        <text>a cytidine in mRNA + S-adenosyl-L-methionine = a 5-methylcytidine in mRNA + S-adenosyl-L-homocysteine + H(+)</text>
        <dbReference type="Rhea" id="RHEA:61464"/>
        <dbReference type="Rhea" id="RHEA-COMP:15145"/>
        <dbReference type="Rhea" id="RHEA-COMP:15826"/>
        <dbReference type="ChEBI" id="CHEBI:15378"/>
        <dbReference type="ChEBI" id="CHEBI:57856"/>
        <dbReference type="ChEBI" id="CHEBI:59789"/>
        <dbReference type="ChEBI" id="CHEBI:74483"/>
        <dbReference type="ChEBI" id="CHEBI:82748"/>
    </reaction>
</comment>
<comment type="subcellular location">
    <subcellularLocation>
        <location evidence="3">Mitochondrion</location>
    </subcellularLocation>
</comment>
<comment type="similarity">
    <text evidence="4">Belongs to the class I-like SAM-binding methyltransferase superfamily. RsmB/NOP family.</text>
</comment>
<proteinExistence type="evidence at transcript level"/>
<sequence>MAACRGFLLRRINDSCLTFRRHKFKKKWATTLPKIPCSRLALQYFDMNYSMQFGDLWPSIRISLLTEQKYGALVNNFSHKETVLKNLSAFNAKDFISEAQHVISLLQIQNNLDTSEKMTSGEASLNLVGQKNNAEKTQATNLLSSLSNTKLTCFKFSRGDISRFPQSRSDSFGLLEYYLMDAASLLPVLALDVQHGHSVLDLCAAPGGKTLALLQTENCQYLAANDLSTSRSSRLHRVLRSYVPRAQRTEHKVCITSQDGRLWGDAEANTYDRVLVDVPCTTDRHSLLEEENNIFHRIRTKQRQMLPLLQAELLVAGLRAVRPGGEVVYSTCSLSQLQNECVVERAVELAASDHGVHVKPQDLSCFREVFKNTFNFFQGCRVGELVLPHLTANFGPMFFCKLLRIE</sequence>
<dbReference type="EC" id="2.1.1.-" evidence="2"/>
<dbReference type="EMBL" id="CR848182">
    <property type="protein sequence ID" value="CAJ83825.1"/>
    <property type="molecule type" value="mRNA"/>
</dbReference>
<dbReference type="EMBL" id="BC080376">
    <property type="protein sequence ID" value="AAH80376.1"/>
    <property type="molecule type" value="mRNA"/>
</dbReference>
<dbReference type="RefSeq" id="NP_001007930.1">
    <property type="nucleotide sequence ID" value="NM_001007929.1"/>
</dbReference>
<dbReference type="SMR" id="Q66KI9"/>
<dbReference type="FunCoup" id="Q66KI9">
    <property type="interactions" value="952"/>
</dbReference>
<dbReference type="STRING" id="8364.ENSXETP00000051130"/>
<dbReference type="PaxDb" id="8364-ENSXETP00000052934"/>
<dbReference type="DNASU" id="100493736"/>
<dbReference type="GeneID" id="100493736"/>
<dbReference type="KEGG" id="xtr:100493736"/>
<dbReference type="AGR" id="Xenbase:XB-GENE-948188"/>
<dbReference type="CTD" id="387338"/>
<dbReference type="Xenbase" id="XB-GENE-948188">
    <property type="gene designation" value="nsun4"/>
</dbReference>
<dbReference type="eggNOG" id="KOG2198">
    <property type="taxonomic scope" value="Eukaryota"/>
</dbReference>
<dbReference type="InParanoid" id="Q66KI9"/>
<dbReference type="OMA" id="MVNNFGD"/>
<dbReference type="OrthoDB" id="8020218at2759"/>
<dbReference type="Proteomes" id="UP000008143">
    <property type="component" value="Chromosome 4"/>
</dbReference>
<dbReference type="Bgee" id="ENSXETG00000024501">
    <property type="expression patterns" value="Expressed in 2-cell stage embryo and 15 other cell types or tissues"/>
</dbReference>
<dbReference type="GO" id="GO:0005759">
    <property type="term" value="C:mitochondrial matrix"/>
    <property type="evidence" value="ECO:0000250"/>
    <property type="project" value="UniProtKB"/>
</dbReference>
<dbReference type="GO" id="GO:0062152">
    <property type="term" value="F:mRNA (cytidine-5-)-methyltransferase activity"/>
    <property type="evidence" value="ECO:0000250"/>
    <property type="project" value="UniProtKB"/>
</dbReference>
<dbReference type="GO" id="GO:0003723">
    <property type="term" value="F:RNA binding"/>
    <property type="evidence" value="ECO:0007669"/>
    <property type="project" value="UniProtKB-KW"/>
</dbReference>
<dbReference type="GO" id="GO:0000957">
    <property type="term" value="P:mitochondrial RNA catabolic process"/>
    <property type="evidence" value="ECO:0000250"/>
    <property type="project" value="UniProtKB"/>
</dbReference>
<dbReference type="GO" id="GO:0001510">
    <property type="term" value="P:RNA methylation"/>
    <property type="evidence" value="ECO:0007669"/>
    <property type="project" value="InterPro"/>
</dbReference>
<dbReference type="GO" id="GO:0006364">
    <property type="term" value="P:rRNA processing"/>
    <property type="evidence" value="ECO:0007669"/>
    <property type="project" value="UniProtKB-KW"/>
</dbReference>
<dbReference type="CDD" id="cd02440">
    <property type="entry name" value="AdoMet_MTases"/>
    <property type="match status" value="1"/>
</dbReference>
<dbReference type="FunFam" id="3.40.50.150:FF:000055">
    <property type="entry name" value="5-methylcytosine rRNA methyltransferase NSUN4"/>
    <property type="match status" value="1"/>
</dbReference>
<dbReference type="Gene3D" id="6.20.240.40">
    <property type="match status" value="1"/>
</dbReference>
<dbReference type="Gene3D" id="3.40.50.150">
    <property type="entry name" value="Vaccinia Virus protein VP39"/>
    <property type="match status" value="1"/>
</dbReference>
<dbReference type="InterPro" id="IPR049560">
    <property type="entry name" value="MeTrfase_RsmB-F_NOP2_cat"/>
</dbReference>
<dbReference type="InterPro" id="IPR001678">
    <property type="entry name" value="MeTrfase_RsmB-F_NOP2_dom"/>
</dbReference>
<dbReference type="InterPro" id="IPR023267">
    <property type="entry name" value="RCMT"/>
</dbReference>
<dbReference type="InterPro" id="IPR029063">
    <property type="entry name" value="SAM-dependent_MTases_sf"/>
</dbReference>
<dbReference type="PANTHER" id="PTHR22808:SF3">
    <property type="entry name" value="5-METHYLCYTOSINE RRNA METHYLTRANSFERASE NSUN4"/>
    <property type="match status" value="1"/>
</dbReference>
<dbReference type="PANTHER" id="PTHR22808">
    <property type="entry name" value="NCL1 YEAST -RELATED NOL1/NOP2/FMU SUN DOMAIN-CONTAINING"/>
    <property type="match status" value="1"/>
</dbReference>
<dbReference type="Pfam" id="PF01189">
    <property type="entry name" value="Methyltr_RsmB-F"/>
    <property type="match status" value="1"/>
</dbReference>
<dbReference type="PRINTS" id="PR02008">
    <property type="entry name" value="RCMTFAMILY"/>
</dbReference>
<dbReference type="SUPFAM" id="SSF53335">
    <property type="entry name" value="S-adenosyl-L-methionine-dependent methyltransferases"/>
    <property type="match status" value="1"/>
</dbReference>
<dbReference type="PROSITE" id="PS51686">
    <property type="entry name" value="SAM_MT_RSMB_NOP"/>
    <property type="match status" value="1"/>
</dbReference>
<name>NSUN4_XENTR</name>
<feature type="transit peptide" description="Mitochondrion" evidence="3">
    <location>
        <begin position="1"/>
        <end status="unknown"/>
    </location>
</feature>
<feature type="chain" id="PRO_0000289237" description="5-cytosine rRNA methyltransferase NSUN4">
    <location>
        <begin status="unknown"/>
        <end position="406"/>
    </location>
</feature>
<feature type="active site" description="Nucleophile" evidence="4">
    <location>
        <position position="332"/>
    </location>
</feature>
<feature type="binding site" evidence="3">
    <location>
        <position position="207"/>
    </location>
    <ligand>
        <name>S-adenosyl-L-methionine</name>
        <dbReference type="ChEBI" id="CHEBI:59789"/>
    </ligand>
</feature>
<feature type="binding site" evidence="3">
    <location>
        <position position="208"/>
    </location>
    <ligand>
        <name>S-adenosyl-L-methionine</name>
        <dbReference type="ChEBI" id="CHEBI:59789"/>
    </ligand>
</feature>
<feature type="binding site" evidence="3">
    <location>
        <position position="209"/>
    </location>
    <ligand>
        <name>S-adenosyl-L-methionine</name>
        <dbReference type="ChEBI" id="CHEBI:59789"/>
    </ligand>
</feature>
<feature type="binding site" evidence="3">
    <location>
        <position position="226"/>
    </location>
    <ligand>
        <name>S-adenosyl-L-methionine</name>
        <dbReference type="ChEBI" id="CHEBI:59789"/>
    </ligand>
</feature>
<feature type="binding site" evidence="3">
    <location>
        <position position="231"/>
    </location>
    <ligand>
        <name>S-adenosyl-L-methionine</name>
        <dbReference type="ChEBI" id="CHEBI:59789"/>
    </ligand>
</feature>
<feature type="binding site" evidence="3 4">
    <location>
        <position position="259"/>
    </location>
    <ligand>
        <name>S-adenosyl-L-methionine</name>
        <dbReference type="ChEBI" id="CHEBI:59789"/>
    </ligand>
</feature>
<feature type="binding site" evidence="3">
    <location>
        <position position="260"/>
    </location>
    <ligand>
        <name>S-adenosyl-L-methionine</name>
        <dbReference type="ChEBI" id="CHEBI:59789"/>
    </ligand>
</feature>
<feature type="binding site" evidence="4">
    <location>
        <position position="277"/>
    </location>
    <ligand>
        <name>S-adenosyl-L-methionine</name>
        <dbReference type="ChEBI" id="CHEBI:59789"/>
    </ligand>
</feature>
<organism>
    <name type="scientific">Xenopus tropicalis</name>
    <name type="common">Western clawed frog</name>
    <name type="synonym">Silurana tropicalis</name>
    <dbReference type="NCBI Taxonomy" id="8364"/>
    <lineage>
        <taxon>Eukaryota</taxon>
        <taxon>Metazoa</taxon>
        <taxon>Chordata</taxon>
        <taxon>Craniata</taxon>
        <taxon>Vertebrata</taxon>
        <taxon>Euteleostomi</taxon>
        <taxon>Amphibia</taxon>
        <taxon>Batrachia</taxon>
        <taxon>Anura</taxon>
        <taxon>Pipoidea</taxon>
        <taxon>Pipidae</taxon>
        <taxon>Xenopodinae</taxon>
        <taxon>Xenopus</taxon>
        <taxon>Silurana</taxon>
    </lineage>
</organism>